<comment type="function">
    <text evidence="1">Involved in the biosynthesis of branched-chain amino acids (BCAA). Catalyzes an alkyl-migration followed by a ketol-acid reduction of (S)-2-acetolactate (S2AL) to yield (R)-2,3-dihydroxy-isovalerate. In the isomerase reaction, S2AL is rearranged via a Mg-dependent methyl migration to produce 3-hydroxy-3-methyl-2-ketobutyrate (HMKB). In the reductase reaction, this 2-ketoacid undergoes a metal-dependent reduction by NADPH to yield (R)-2,3-dihydroxy-isovalerate.</text>
</comment>
<comment type="catalytic activity">
    <reaction evidence="1">
        <text>(2R)-2,3-dihydroxy-3-methylbutanoate + NADP(+) = (2S)-2-acetolactate + NADPH + H(+)</text>
        <dbReference type="Rhea" id="RHEA:22068"/>
        <dbReference type="ChEBI" id="CHEBI:15378"/>
        <dbReference type="ChEBI" id="CHEBI:49072"/>
        <dbReference type="ChEBI" id="CHEBI:57783"/>
        <dbReference type="ChEBI" id="CHEBI:58349"/>
        <dbReference type="ChEBI" id="CHEBI:58476"/>
        <dbReference type="EC" id="1.1.1.86"/>
    </reaction>
</comment>
<comment type="catalytic activity">
    <reaction evidence="1">
        <text>(2R,3R)-2,3-dihydroxy-3-methylpentanoate + NADP(+) = (S)-2-ethyl-2-hydroxy-3-oxobutanoate + NADPH + H(+)</text>
        <dbReference type="Rhea" id="RHEA:13493"/>
        <dbReference type="ChEBI" id="CHEBI:15378"/>
        <dbReference type="ChEBI" id="CHEBI:49256"/>
        <dbReference type="ChEBI" id="CHEBI:49258"/>
        <dbReference type="ChEBI" id="CHEBI:57783"/>
        <dbReference type="ChEBI" id="CHEBI:58349"/>
        <dbReference type="EC" id="1.1.1.86"/>
    </reaction>
</comment>
<comment type="cofactor">
    <cofactor evidence="1">
        <name>Mg(2+)</name>
        <dbReference type="ChEBI" id="CHEBI:18420"/>
    </cofactor>
    <text evidence="1">Binds 2 magnesium ions per subunit.</text>
</comment>
<comment type="pathway">
    <text evidence="1">Amino-acid biosynthesis; L-isoleucine biosynthesis; L-isoleucine from 2-oxobutanoate: step 2/4.</text>
</comment>
<comment type="pathway">
    <text evidence="1">Amino-acid biosynthesis; L-valine biosynthesis; L-valine from pyruvate: step 2/4.</text>
</comment>
<comment type="similarity">
    <text evidence="1">Belongs to the ketol-acid reductoisomerase family.</text>
</comment>
<feature type="chain" id="PRO_0000151358" description="Ketol-acid reductoisomerase (NADP(+))">
    <location>
        <begin position="1"/>
        <end position="334"/>
    </location>
</feature>
<feature type="domain" description="KARI N-terminal Rossmann" evidence="2">
    <location>
        <begin position="1"/>
        <end position="181"/>
    </location>
</feature>
<feature type="domain" description="KARI C-terminal knotted" evidence="3">
    <location>
        <begin position="182"/>
        <end position="327"/>
    </location>
</feature>
<feature type="active site" evidence="1">
    <location>
        <position position="107"/>
    </location>
</feature>
<feature type="binding site" evidence="1">
    <location>
        <begin position="25"/>
        <end position="28"/>
    </location>
    <ligand>
        <name>NADP(+)</name>
        <dbReference type="ChEBI" id="CHEBI:58349"/>
    </ligand>
</feature>
<feature type="binding site" evidence="1">
    <location>
        <position position="48"/>
    </location>
    <ligand>
        <name>NADP(+)</name>
        <dbReference type="ChEBI" id="CHEBI:58349"/>
    </ligand>
</feature>
<feature type="binding site" evidence="1">
    <location>
        <position position="52"/>
    </location>
    <ligand>
        <name>NADP(+)</name>
        <dbReference type="ChEBI" id="CHEBI:58349"/>
    </ligand>
</feature>
<feature type="binding site" evidence="1">
    <location>
        <begin position="82"/>
        <end position="85"/>
    </location>
    <ligand>
        <name>NADP(+)</name>
        <dbReference type="ChEBI" id="CHEBI:58349"/>
    </ligand>
</feature>
<feature type="binding site" evidence="1">
    <location>
        <position position="133"/>
    </location>
    <ligand>
        <name>NADP(+)</name>
        <dbReference type="ChEBI" id="CHEBI:58349"/>
    </ligand>
</feature>
<feature type="binding site" evidence="1">
    <location>
        <position position="190"/>
    </location>
    <ligand>
        <name>Mg(2+)</name>
        <dbReference type="ChEBI" id="CHEBI:18420"/>
        <label>1</label>
    </ligand>
</feature>
<feature type="binding site" evidence="1">
    <location>
        <position position="190"/>
    </location>
    <ligand>
        <name>Mg(2+)</name>
        <dbReference type="ChEBI" id="CHEBI:18420"/>
        <label>2</label>
    </ligand>
</feature>
<feature type="binding site" evidence="1">
    <location>
        <position position="194"/>
    </location>
    <ligand>
        <name>Mg(2+)</name>
        <dbReference type="ChEBI" id="CHEBI:18420"/>
        <label>1</label>
    </ligand>
</feature>
<feature type="binding site" evidence="1">
    <location>
        <position position="226"/>
    </location>
    <ligand>
        <name>Mg(2+)</name>
        <dbReference type="ChEBI" id="CHEBI:18420"/>
        <label>2</label>
    </ligand>
</feature>
<feature type="binding site" evidence="1">
    <location>
        <position position="230"/>
    </location>
    <ligand>
        <name>Mg(2+)</name>
        <dbReference type="ChEBI" id="CHEBI:18420"/>
        <label>2</label>
    </ligand>
</feature>
<feature type="binding site" evidence="1">
    <location>
        <position position="251"/>
    </location>
    <ligand>
        <name>substrate</name>
    </ligand>
</feature>
<name>ILVC_STAAR</name>
<gene>
    <name evidence="1" type="primary">ilvC</name>
    <name type="ordered locus">SAR2143</name>
</gene>
<keyword id="KW-0028">Amino-acid biosynthesis</keyword>
<keyword id="KW-0100">Branched-chain amino acid biosynthesis</keyword>
<keyword id="KW-0460">Magnesium</keyword>
<keyword id="KW-0479">Metal-binding</keyword>
<keyword id="KW-0521">NADP</keyword>
<keyword id="KW-0560">Oxidoreductase</keyword>
<sequence length="334" mass="37014">MTTVYYDQDVKTDALQGKKIAVVGYGSQGHAHAQNLKDNGYDVVIGIRPGRSFDKAKEDGFDVFPVAEAVKQADVIMVLLPDEIQGDVYKNEIEPNLEKHNALAFAHGFNIHFGVIQPPADVDVFLVAPKGPGHLVRRTFVEGSAVPSLFGIQQDASGQARNIALSYAKGIGATRAGVIETTFKEETETDLFGEQAVLCGGVSKLIQSGFETLVEAGYQPELAYFEVLHEMKLIVDLMYEGGMENVRYSISNTAEFGDYVSGPRVITPDVKENMKAVLTDIQNGNFSNRFIEDNKNGFKEFYKLREEQHGHQIEKVGRELREMMPFIKSKSIEK</sequence>
<reference key="1">
    <citation type="journal article" date="2004" name="Proc. Natl. Acad. Sci. U.S.A.">
        <title>Complete genomes of two clinical Staphylococcus aureus strains: evidence for the rapid evolution of virulence and drug resistance.</title>
        <authorList>
            <person name="Holden M.T.G."/>
            <person name="Feil E.J."/>
            <person name="Lindsay J.A."/>
            <person name="Peacock S.J."/>
            <person name="Day N.P.J."/>
            <person name="Enright M.C."/>
            <person name="Foster T.J."/>
            <person name="Moore C.E."/>
            <person name="Hurst L."/>
            <person name="Atkin R."/>
            <person name="Barron A."/>
            <person name="Bason N."/>
            <person name="Bentley S.D."/>
            <person name="Chillingworth C."/>
            <person name="Chillingworth T."/>
            <person name="Churcher C."/>
            <person name="Clark L."/>
            <person name="Corton C."/>
            <person name="Cronin A."/>
            <person name="Doggett J."/>
            <person name="Dowd L."/>
            <person name="Feltwell T."/>
            <person name="Hance Z."/>
            <person name="Harris B."/>
            <person name="Hauser H."/>
            <person name="Holroyd S."/>
            <person name="Jagels K."/>
            <person name="James K.D."/>
            <person name="Lennard N."/>
            <person name="Line A."/>
            <person name="Mayes R."/>
            <person name="Moule S."/>
            <person name="Mungall K."/>
            <person name="Ormond D."/>
            <person name="Quail M.A."/>
            <person name="Rabbinowitsch E."/>
            <person name="Rutherford K.M."/>
            <person name="Sanders M."/>
            <person name="Sharp S."/>
            <person name="Simmonds M."/>
            <person name="Stevens K."/>
            <person name="Whitehead S."/>
            <person name="Barrell B.G."/>
            <person name="Spratt B.G."/>
            <person name="Parkhill J."/>
        </authorList>
    </citation>
    <scope>NUCLEOTIDE SEQUENCE [LARGE SCALE GENOMIC DNA]</scope>
    <source>
        <strain>MRSA252</strain>
    </source>
</reference>
<dbReference type="EC" id="1.1.1.86" evidence="1"/>
<dbReference type="EMBL" id="BX571856">
    <property type="protein sequence ID" value="CAG41124.1"/>
    <property type="molecule type" value="Genomic_DNA"/>
</dbReference>
<dbReference type="RefSeq" id="WP_000214552.1">
    <property type="nucleotide sequence ID" value="NC_002952.2"/>
</dbReference>
<dbReference type="SMR" id="Q6GF17"/>
<dbReference type="KEGG" id="sar:SAR2143"/>
<dbReference type="HOGENOM" id="CLU_033821_0_1_9"/>
<dbReference type="UniPathway" id="UPA00047">
    <property type="reaction ID" value="UER00056"/>
</dbReference>
<dbReference type="UniPathway" id="UPA00049">
    <property type="reaction ID" value="UER00060"/>
</dbReference>
<dbReference type="Proteomes" id="UP000000596">
    <property type="component" value="Chromosome"/>
</dbReference>
<dbReference type="GO" id="GO:0005829">
    <property type="term" value="C:cytosol"/>
    <property type="evidence" value="ECO:0007669"/>
    <property type="project" value="TreeGrafter"/>
</dbReference>
<dbReference type="GO" id="GO:0004455">
    <property type="term" value="F:ketol-acid reductoisomerase activity"/>
    <property type="evidence" value="ECO:0007669"/>
    <property type="project" value="UniProtKB-UniRule"/>
</dbReference>
<dbReference type="GO" id="GO:0000287">
    <property type="term" value="F:magnesium ion binding"/>
    <property type="evidence" value="ECO:0007669"/>
    <property type="project" value="UniProtKB-UniRule"/>
</dbReference>
<dbReference type="GO" id="GO:0050661">
    <property type="term" value="F:NADP binding"/>
    <property type="evidence" value="ECO:0007669"/>
    <property type="project" value="InterPro"/>
</dbReference>
<dbReference type="GO" id="GO:0009097">
    <property type="term" value="P:isoleucine biosynthetic process"/>
    <property type="evidence" value="ECO:0007669"/>
    <property type="project" value="UniProtKB-UniRule"/>
</dbReference>
<dbReference type="GO" id="GO:0009099">
    <property type="term" value="P:L-valine biosynthetic process"/>
    <property type="evidence" value="ECO:0007669"/>
    <property type="project" value="UniProtKB-UniRule"/>
</dbReference>
<dbReference type="FunFam" id="3.40.50.720:FF:000023">
    <property type="entry name" value="Ketol-acid reductoisomerase (NADP(+))"/>
    <property type="match status" value="1"/>
</dbReference>
<dbReference type="Gene3D" id="6.10.240.10">
    <property type="match status" value="1"/>
</dbReference>
<dbReference type="Gene3D" id="3.40.50.720">
    <property type="entry name" value="NAD(P)-binding Rossmann-like Domain"/>
    <property type="match status" value="1"/>
</dbReference>
<dbReference type="HAMAP" id="MF_00435">
    <property type="entry name" value="IlvC"/>
    <property type="match status" value="1"/>
</dbReference>
<dbReference type="InterPro" id="IPR008927">
    <property type="entry name" value="6-PGluconate_DH-like_C_sf"/>
</dbReference>
<dbReference type="InterPro" id="IPR013023">
    <property type="entry name" value="KARI"/>
</dbReference>
<dbReference type="InterPro" id="IPR000506">
    <property type="entry name" value="KARI_C"/>
</dbReference>
<dbReference type="InterPro" id="IPR013116">
    <property type="entry name" value="KARI_N"/>
</dbReference>
<dbReference type="InterPro" id="IPR014359">
    <property type="entry name" value="KARI_prok"/>
</dbReference>
<dbReference type="InterPro" id="IPR036291">
    <property type="entry name" value="NAD(P)-bd_dom_sf"/>
</dbReference>
<dbReference type="NCBIfam" id="TIGR00465">
    <property type="entry name" value="ilvC"/>
    <property type="match status" value="1"/>
</dbReference>
<dbReference type="NCBIfam" id="NF004017">
    <property type="entry name" value="PRK05479.1"/>
    <property type="match status" value="1"/>
</dbReference>
<dbReference type="NCBIfam" id="NF009940">
    <property type="entry name" value="PRK13403.1"/>
    <property type="match status" value="1"/>
</dbReference>
<dbReference type="PANTHER" id="PTHR21371">
    <property type="entry name" value="KETOL-ACID REDUCTOISOMERASE, MITOCHONDRIAL"/>
    <property type="match status" value="1"/>
</dbReference>
<dbReference type="PANTHER" id="PTHR21371:SF1">
    <property type="entry name" value="KETOL-ACID REDUCTOISOMERASE, MITOCHONDRIAL"/>
    <property type="match status" value="1"/>
</dbReference>
<dbReference type="Pfam" id="PF01450">
    <property type="entry name" value="KARI_C"/>
    <property type="match status" value="1"/>
</dbReference>
<dbReference type="Pfam" id="PF07991">
    <property type="entry name" value="KARI_N"/>
    <property type="match status" value="1"/>
</dbReference>
<dbReference type="PIRSF" id="PIRSF000116">
    <property type="entry name" value="IlvC_gammaproteo"/>
    <property type="match status" value="1"/>
</dbReference>
<dbReference type="SUPFAM" id="SSF48179">
    <property type="entry name" value="6-phosphogluconate dehydrogenase C-terminal domain-like"/>
    <property type="match status" value="1"/>
</dbReference>
<dbReference type="SUPFAM" id="SSF51735">
    <property type="entry name" value="NAD(P)-binding Rossmann-fold domains"/>
    <property type="match status" value="1"/>
</dbReference>
<dbReference type="PROSITE" id="PS51851">
    <property type="entry name" value="KARI_C"/>
    <property type="match status" value="1"/>
</dbReference>
<dbReference type="PROSITE" id="PS51850">
    <property type="entry name" value="KARI_N"/>
    <property type="match status" value="1"/>
</dbReference>
<accession>Q6GF17</accession>
<protein>
    <recommendedName>
        <fullName evidence="1">Ketol-acid reductoisomerase (NADP(+))</fullName>
        <shortName evidence="1">KARI</shortName>
        <ecNumber evidence="1">1.1.1.86</ecNumber>
    </recommendedName>
    <alternativeName>
        <fullName evidence="1">Acetohydroxy-acid isomeroreductase</fullName>
        <shortName evidence="1">AHIR</shortName>
    </alternativeName>
    <alternativeName>
        <fullName evidence="1">Alpha-keto-beta-hydroxylacyl reductoisomerase</fullName>
    </alternativeName>
    <alternativeName>
        <fullName evidence="1">Ketol-acid reductoisomerase type 1</fullName>
    </alternativeName>
    <alternativeName>
        <fullName evidence="1">Ketol-acid reductoisomerase type I</fullName>
    </alternativeName>
</protein>
<proteinExistence type="inferred from homology"/>
<evidence type="ECO:0000255" key="1">
    <source>
        <dbReference type="HAMAP-Rule" id="MF_00435"/>
    </source>
</evidence>
<evidence type="ECO:0000255" key="2">
    <source>
        <dbReference type="PROSITE-ProRule" id="PRU01197"/>
    </source>
</evidence>
<evidence type="ECO:0000255" key="3">
    <source>
        <dbReference type="PROSITE-ProRule" id="PRU01198"/>
    </source>
</evidence>
<organism>
    <name type="scientific">Staphylococcus aureus (strain MRSA252)</name>
    <dbReference type="NCBI Taxonomy" id="282458"/>
    <lineage>
        <taxon>Bacteria</taxon>
        <taxon>Bacillati</taxon>
        <taxon>Bacillota</taxon>
        <taxon>Bacilli</taxon>
        <taxon>Bacillales</taxon>
        <taxon>Staphylococcaceae</taxon>
        <taxon>Staphylococcus</taxon>
    </lineage>
</organism>